<accession>B7IEE2</accession>
<proteinExistence type="inferred from homology"/>
<protein>
    <recommendedName>
        <fullName evidence="1">Pyrrolidone-carboxylate peptidase</fullName>
        <ecNumber evidence="1">3.4.19.3</ecNumber>
    </recommendedName>
    <alternativeName>
        <fullName evidence="1">5-oxoprolyl-peptidase</fullName>
    </alternativeName>
    <alternativeName>
        <fullName evidence="1">Pyroglutamyl-peptidase I</fullName>
        <shortName evidence="1">PGP-I</shortName>
        <shortName evidence="1">Pyrase</shortName>
    </alternativeName>
</protein>
<sequence>MKILITGFEPFGGEVVNPSFEAVKHLPDSIEKAQIVKAAIHTVFRKSIEVLEELIVKEKPDIVICVGQAGGRAEITIERVAINIDDAKNPDNEGNTPKDEVIFEDGENAYFSNLPIKKMVEEIKNCKIPASISNSAGTYVCNHLMYGLLYLINKKYKNMKGGFIHVPYLPQQVLNKKNVPSMSLDNIVQALVCSIKAILKEYNDE</sequence>
<evidence type="ECO:0000255" key="1">
    <source>
        <dbReference type="HAMAP-Rule" id="MF_00417"/>
    </source>
</evidence>
<reference key="1">
    <citation type="journal article" date="2009" name="J. Bacteriol.">
        <title>The genome of Thermosipho africanus TCF52B: lateral genetic connections to the Firmicutes and Archaea.</title>
        <authorList>
            <person name="Nesboe C.L."/>
            <person name="Bapteste E."/>
            <person name="Curtis B."/>
            <person name="Dahle H."/>
            <person name="Lopez P."/>
            <person name="Macleod D."/>
            <person name="Dlutek M."/>
            <person name="Bowman S."/>
            <person name="Zhaxybayeva O."/>
            <person name="Birkeland N.-K."/>
            <person name="Doolittle W.F."/>
        </authorList>
    </citation>
    <scope>NUCLEOTIDE SEQUENCE [LARGE SCALE GENOMIC DNA]</scope>
    <source>
        <strain>TCF52B</strain>
    </source>
</reference>
<name>PCP_THEAB</name>
<gene>
    <name evidence="1" type="primary">pcp</name>
    <name type="ordered locus">THA_1947</name>
</gene>
<organism>
    <name type="scientific">Thermosipho africanus (strain TCF52B)</name>
    <dbReference type="NCBI Taxonomy" id="484019"/>
    <lineage>
        <taxon>Bacteria</taxon>
        <taxon>Thermotogati</taxon>
        <taxon>Thermotogota</taxon>
        <taxon>Thermotogae</taxon>
        <taxon>Thermotogales</taxon>
        <taxon>Fervidobacteriaceae</taxon>
        <taxon>Thermosipho</taxon>
    </lineage>
</organism>
<feature type="chain" id="PRO_1000124004" description="Pyrrolidone-carboxylate peptidase">
    <location>
        <begin position="1"/>
        <end position="205"/>
    </location>
</feature>
<feature type="active site" evidence="1">
    <location>
        <position position="78"/>
    </location>
</feature>
<feature type="active site" evidence="1">
    <location>
        <position position="141"/>
    </location>
</feature>
<feature type="active site" evidence="1">
    <location>
        <position position="165"/>
    </location>
</feature>
<keyword id="KW-0963">Cytoplasm</keyword>
<keyword id="KW-0378">Hydrolase</keyword>
<keyword id="KW-0645">Protease</keyword>
<keyword id="KW-1185">Reference proteome</keyword>
<keyword id="KW-0788">Thiol protease</keyword>
<comment type="function">
    <text evidence="1">Removes 5-oxoproline from various penultimate amino acid residues except L-proline.</text>
</comment>
<comment type="catalytic activity">
    <reaction evidence="1">
        <text>Release of an N-terminal pyroglutamyl group from a polypeptide, the second amino acid generally not being Pro.</text>
        <dbReference type="EC" id="3.4.19.3"/>
    </reaction>
</comment>
<comment type="subunit">
    <text evidence="1">Homotetramer.</text>
</comment>
<comment type="subcellular location">
    <subcellularLocation>
        <location evidence="1">Cytoplasm</location>
    </subcellularLocation>
</comment>
<comment type="similarity">
    <text evidence="1">Belongs to the peptidase C15 family.</text>
</comment>
<dbReference type="EC" id="3.4.19.3" evidence="1"/>
<dbReference type="EMBL" id="CP001185">
    <property type="protein sequence ID" value="ACJ76369.1"/>
    <property type="molecule type" value="Genomic_DNA"/>
</dbReference>
<dbReference type="RefSeq" id="WP_012580495.1">
    <property type="nucleotide sequence ID" value="NC_011653.1"/>
</dbReference>
<dbReference type="SMR" id="B7IEE2"/>
<dbReference type="STRING" id="484019.THA_1947"/>
<dbReference type="MEROPS" id="C15.001"/>
<dbReference type="KEGG" id="taf:THA_1947"/>
<dbReference type="eggNOG" id="COG2039">
    <property type="taxonomic scope" value="Bacteria"/>
</dbReference>
<dbReference type="HOGENOM" id="CLU_043960_4_0_0"/>
<dbReference type="OrthoDB" id="9779738at2"/>
<dbReference type="Proteomes" id="UP000002453">
    <property type="component" value="Chromosome"/>
</dbReference>
<dbReference type="GO" id="GO:0005829">
    <property type="term" value="C:cytosol"/>
    <property type="evidence" value="ECO:0007669"/>
    <property type="project" value="InterPro"/>
</dbReference>
<dbReference type="GO" id="GO:0016920">
    <property type="term" value="F:pyroglutamyl-peptidase activity"/>
    <property type="evidence" value="ECO:0007669"/>
    <property type="project" value="UniProtKB-UniRule"/>
</dbReference>
<dbReference type="GO" id="GO:0006508">
    <property type="term" value="P:proteolysis"/>
    <property type="evidence" value="ECO:0007669"/>
    <property type="project" value="UniProtKB-KW"/>
</dbReference>
<dbReference type="CDD" id="cd00501">
    <property type="entry name" value="Peptidase_C15"/>
    <property type="match status" value="1"/>
</dbReference>
<dbReference type="FunFam" id="3.40.630.20:FF:000001">
    <property type="entry name" value="Pyrrolidone-carboxylate peptidase"/>
    <property type="match status" value="1"/>
</dbReference>
<dbReference type="Gene3D" id="3.40.630.20">
    <property type="entry name" value="Peptidase C15, pyroglutamyl peptidase I-like"/>
    <property type="match status" value="1"/>
</dbReference>
<dbReference type="HAMAP" id="MF_00417">
    <property type="entry name" value="Pyrrolid_peptidase"/>
    <property type="match status" value="1"/>
</dbReference>
<dbReference type="InterPro" id="IPR000816">
    <property type="entry name" value="Peptidase_C15"/>
</dbReference>
<dbReference type="InterPro" id="IPR016125">
    <property type="entry name" value="Peptidase_C15-like"/>
</dbReference>
<dbReference type="InterPro" id="IPR036440">
    <property type="entry name" value="Peptidase_C15-like_sf"/>
</dbReference>
<dbReference type="InterPro" id="IPR029762">
    <property type="entry name" value="PGP-I_bact-type"/>
</dbReference>
<dbReference type="InterPro" id="IPR033694">
    <property type="entry name" value="PGPEP1_Cys_AS"/>
</dbReference>
<dbReference type="InterPro" id="IPR033693">
    <property type="entry name" value="PGPEP1_Glu_AS"/>
</dbReference>
<dbReference type="NCBIfam" id="NF009676">
    <property type="entry name" value="PRK13197.1"/>
    <property type="match status" value="1"/>
</dbReference>
<dbReference type="NCBIfam" id="TIGR00504">
    <property type="entry name" value="pyro_pdase"/>
    <property type="match status" value="1"/>
</dbReference>
<dbReference type="PANTHER" id="PTHR23402">
    <property type="entry name" value="PROTEASE FAMILY C15 PYROGLUTAMYL-PEPTIDASE I-RELATED"/>
    <property type="match status" value="1"/>
</dbReference>
<dbReference type="PANTHER" id="PTHR23402:SF1">
    <property type="entry name" value="PYROGLUTAMYL-PEPTIDASE I"/>
    <property type="match status" value="1"/>
</dbReference>
<dbReference type="Pfam" id="PF01470">
    <property type="entry name" value="Peptidase_C15"/>
    <property type="match status" value="1"/>
</dbReference>
<dbReference type="PIRSF" id="PIRSF015592">
    <property type="entry name" value="Prld-crbxl_pptds"/>
    <property type="match status" value="1"/>
</dbReference>
<dbReference type="PRINTS" id="PR00706">
    <property type="entry name" value="PYROGLUPTASE"/>
</dbReference>
<dbReference type="SUPFAM" id="SSF53182">
    <property type="entry name" value="Pyrrolidone carboxyl peptidase (pyroglutamate aminopeptidase)"/>
    <property type="match status" value="1"/>
</dbReference>
<dbReference type="PROSITE" id="PS01334">
    <property type="entry name" value="PYRASE_CYS"/>
    <property type="match status" value="1"/>
</dbReference>
<dbReference type="PROSITE" id="PS01333">
    <property type="entry name" value="PYRASE_GLU"/>
    <property type="match status" value="1"/>
</dbReference>